<proteinExistence type="inferred from homology"/>
<accession>A9QYX3</accession>
<protein>
    <recommendedName>
        <fullName evidence="1">Holliday junction branch migration complex subunit RuvA</fullName>
    </recommendedName>
</protein>
<feature type="chain" id="PRO_1000090391" description="Holliday junction branch migration complex subunit RuvA">
    <location>
        <begin position="1"/>
        <end position="204"/>
    </location>
</feature>
<feature type="region of interest" description="Domain I" evidence="1">
    <location>
        <begin position="1"/>
        <end position="64"/>
    </location>
</feature>
<feature type="region of interest" description="Domain II" evidence="1">
    <location>
        <begin position="65"/>
        <end position="142"/>
    </location>
</feature>
<feature type="region of interest" description="Flexible linker" evidence="1">
    <location>
        <begin position="143"/>
        <end position="155"/>
    </location>
</feature>
<feature type="region of interest" description="Domain III" evidence="1">
    <location>
        <begin position="156"/>
        <end position="204"/>
    </location>
</feature>
<organism>
    <name type="scientific">Yersinia pestis bv. Antiqua (strain Angola)</name>
    <dbReference type="NCBI Taxonomy" id="349746"/>
    <lineage>
        <taxon>Bacteria</taxon>
        <taxon>Pseudomonadati</taxon>
        <taxon>Pseudomonadota</taxon>
        <taxon>Gammaproteobacteria</taxon>
        <taxon>Enterobacterales</taxon>
        <taxon>Yersiniaceae</taxon>
        <taxon>Yersinia</taxon>
    </lineage>
</organism>
<keyword id="KW-0963">Cytoplasm</keyword>
<keyword id="KW-0227">DNA damage</keyword>
<keyword id="KW-0233">DNA recombination</keyword>
<keyword id="KW-0234">DNA repair</keyword>
<keyword id="KW-0238">DNA-binding</keyword>
<name>RUVA_YERPG</name>
<evidence type="ECO:0000255" key="1">
    <source>
        <dbReference type="HAMAP-Rule" id="MF_00031"/>
    </source>
</evidence>
<comment type="function">
    <text evidence="1">The RuvA-RuvB-RuvC complex processes Holliday junction (HJ) DNA during genetic recombination and DNA repair, while the RuvA-RuvB complex plays an important role in the rescue of blocked DNA replication forks via replication fork reversal (RFR). RuvA specifically binds to HJ cruciform DNA, conferring on it an open structure. The RuvB hexamer acts as an ATP-dependent pump, pulling dsDNA into and through the RuvAB complex. HJ branch migration allows RuvC to scan DNA until it finds its consensus sequence, where it cleaves and resolves the cruciform DNA.</text>
</comment>
<comment type="subunit">
    <text evidence="1">Homotetramer. Forms an RuvA(8)-RuvB(12)-Holliday junction (HJ) complex. HJ DNA is sandwiched between 2 RuvA tetramers; dsDNA enters through RuvA and exits via RuvB. An RuvB hexamer assembles on each DNA strand where it exits the tetramer. Each RuvB hexamer is contacted by two RuvA subunits (via domain III) on 2 adjacent RuvB subunits; this complex drives branch migration. In the full resolvosome a probable DNA-RuvA(4)-RuvB(12)-RuvC(2) complex forms which resolves the HJ.</text>
</comment>
<comment type="subcellular location">
    <subcellularLocation>
        <location evidence="1">Cytoplasm</location>
    </subcellularLocation>
</comment>
<comment type="domain">
    <text evidence="1">Has three domains with a flexible linker between the domains II and III and assumes an 'L' shape. Domain III is highly mobile and contacts RuvB.</text>
</comment>
<comment type="similarity">
    <text evidence="1">Belongs to the RuvA family.</text>
</comment>
<gene>
    <name evidence="1" type="primary">ruvA</name>
    <name type="ordered locus">YpAngola_A2421</name>
</gene>
<dbReference type="EMBL" id="CP000901">
    <property type="protein sequence ID" value="ABX87352.1"/>
    <property type="molecule type" value="Genomic_DNA"/>
</dbReference>
<dbReference type="RefSeq" id="WP_002211199.1">
    <property type="nucleotide sequence ID" value="NZ_CP009935.1"/>
</dbReference>
<dbReference type="SMR" id="A9QYX3"/>
<dbReference type="GeneID" id="57976604"/>
<dbReference type="KEGG" id="ypg:YpAngola_A2421"/>
<dbReference type="PATRIC" id="fig|349746.12.peg.3438"/>
<dbReference type="GO" id="GO:0005737">
    <property type="term" value="C:cytoplasm"/>
    <property type="evidence" value="ECO:0007669"/>
    <property type="project" value="UniProtKB-SubCell"/>
</dbReference>
<dbReference type="GO" id="GO:0009379">
    <property type="term" value="C:Holliday junction helicase complex"/>
    <property type="evidence" value="ECO:0007669"/>
    <property type="project" value="InterPro"/>
</dbReference>
<dbReference type="GO" id="GO:0048476">
    <property type="term" value="C:Holliday junction resolvase complex"/>
    <property type="evidence" value="ECO:0007669"/>
    <property type="project" value="UniProtKB-UniRule"/>
</dbReference>
<dbReference type="GO" id="GO:0005524">
    <property type="term" value="F:ATP binding"/>
    <property type="evidence" value="ECO:0007669"/>
    <property type="project" value="InterPro"/>
</dbReference>
<dbReference type="GO" id="GO:0000400">
    <property type="term" value="F:four-way junction DNA binding"/>
    <property type="evidence" value="ECO:0007669"/>
    <property type="project" value="UniProtKB-UniRule"/>
</dbReference>
<dbReference type="GO" id="GO:0009378">
    <property type="term" value="F:four-way junction helicase activity"/>
    <property type="evidence" value="ECO:0007669"/>
    <property type="project" value="InterPro"/>
</dbReference>
<dbReference type="GO" id="GO:0006310">
    <property type="term" value="P:DNA recombination"/>
    <property type="evidence" value="ECO:0007669"/>
    <property type="project" value="UniProtKB-UniRule"/>
</dbReference>
<dbReference type="GO" id="GO:0006281">
    <property type="term" value="P:DNA repair"/>
    <property type="evidence" value="ECO:0007669"/>
    <property type="project" value="UniProtKB-UniRule"/>
</dbReference>
<dbReference type="CDD" id="cd14332">
    <property type="entry name" value="UBA_RuvA_C"/>
    <property type="match status" value="1"/>
</dbReference>
<dbReference type="FunFam" id="1.10.150.20:FF:000012">
    <property type="entry name" value="Holliday junction ATP-dependent DNA helicase RuvA"/>
    <property type="match status" value="1"/>
</dbReference>
<dbReference type="FunFam" id="2.40.50.140:FF:000083">
    <property type="entry name" value="Holliday junction ATP-dependent DNA helicase RuvA"/>
    <property type="match status" value="1"/>
</dbReference>
<dbReference type="Gene3D" id="1.10.150.20">
    <property type="entry name" value="5' to 3' exonuclease, C-terminal subdomain"/>
    <property type="match status" value="1"/>
</dbReference>
<dbReference type="Gene3D" id="1.10.8.10">
    <property type="entry name" value="DNA helicase RuvA subunit, C-terminal domain"/>
    <property type="match status" value="1"/>
</dbReference>
<dbReference type="Gene3D" id="2.40.50.140">
    <property type="entry name" value="Nucleic acid-binding proteins"/>
    <property type="match status" value="1"/>
</dbReference>
<dbReference type="HAMAP" id="MF_00031">
    <property type="entry name" value="DNA_HJ_migration_RuvA"/>
    <property type="match status" value="1"/>
</dbReference>
<dbReference type="InterPro" id="IPR013849">
    <property type="entry name" value="DNA_helicase_Holl-junc_RuvA_I"/>
</dbReference>
<dbReference type="InterPro" id="IPR003583">
    <property type="entry name" value="Hlx-hairpin-Hlx_DNA-bd_motif"/>
</dbReference>
<dbReference type="InterPro" id="IPR012340">
    <property type="entry name" value="NA-bd_OB-fold"/>
</dbReference>
<dbReference type="InterPro" id="IPR000085">
    <property type="entry name" value="RuvA"/>
</dbReference>
<dbReference type="InterPro" id="IPR010994">
    <property type="entry name" value="RuvA_2-like"/>
</dbReference>
<dbReference type="InterPro" id="IPR011114">
    <property type="entry name" value="RuvA_C"/>
</dbReference>
<dbReference type="InterPro" id="IPR036267">
    <property type="entry name" value="RuvA_C_sf"/>
</dbReference>
<dbReference type="NCBIfam" id="TIGR00084">
    <property type="entry name" value="ruvA"/>
    <property type="match status" value="1"/>
</dbReference>
<dbReference type="Pfam" id="PF14520">
    <property type="entry name" value="HHH_5"/>
    <property type="match status" value="1"/>
</dbReference>
<dbReference type="Pfam" id="PF07499">
    <property type="entry name" value="RuvA_C"/>
    <property type="match status" value="1"/>
</dbReference>
<dbReference type="Pfam" id="PF01330">
    <property type="entry name" value="RuvA_N"/>
    <property type="match status" value="1"/>
</dbReference>
<dbReference type="SMART" id="SM00278">
    <property type="entry name" value="HhH1"/>
    <property type="match status" value="2"/>
</dbReference>
<dbReference type="SUPFAM" id="SSF46929">
    <property type="entry name" value="DNA helicase RuvA subunit, C-terminal domain"/>
    <property type="match status" value="1"/>
</dbReference>
<dbReference type="SUPFAM" id="SSF50249">
    <property type="entry name" value="Nucleic acid-binding proteins"/>
    <property type="match status" value="1"/>
</dbReference>
<dbReference type="SUPFAM" id="SSF47781">
    <property type="entry name" value="RuvA domain 2-like"/>
    <property type="match status" value="1"/>
</dbReference>
<reference key="1">
    <citation type="journal article" date="2010" name="J. Bacteriol.">
        <title>Genome sequence of the deep-rooted Yersinia pestis strain Angola reveals new insights into the evolution and pangenome of the plague bacterium.</title>
        <authorList>
            <person name="Eppinger M."/>
            <person name="Worsham P.L."/>
            <person name="Nikolich M.P."/>
            <person name="Riley D.R."/>
            <person name="Sebastian Y."/>
            <person name="Mou S."/>
            <person name="Achtman M."/>
            <person name="Lindler L.E."/>
            <person name="Ravel J."/>
        </authorList>
    </citation>
    <scope>NUCLEOTIDE SEQUENCE [LARGE SCALE GENOMIC DNA]</scope>
    <source>
        <strain>Angola</strain>
    </source>
</reference>
<sequence length="204" mass="22188">MIGRLRGIILEKQPPLVLLETNGVGYEVQLPMTCFYELPELGQEAIIFTQFVVREDAQLLYGFNNKQERALFRELIKVNGVGPKLALAILSGMSAQQFVGAVEREDITTLVKLPGVGKKTAERLVVEMKDRFKGLNGDLFNNTGDISLPTASPQTSDADIEAEAASALVALGYKPQEASRLVSKIAKPGADCETLIRDALRAAL</sequence>